<dbReference type="EMBL" id="AP010656">
    <property type="protein sequence ID" value="BAG83341.1"/>
    <property type="molecule type" value="Genomic_DNA"/>
</dbReference>
<dbReference type="RefSeq" id="WP_012573102.1">
    <property type="nucleotide sequence ID" value="NC_011565.1"/>
</dbReference>
<dbReference type="SMR" id="B6YQ69"/>
<dbReference type="STRING" id="511995.CFPG_078"/>
<dbReference type="KEGG" id="aps:CFPG_078"/>
<dbReference type="eggNOG" id="COG0256">
    <property type="taxonomic scope" value="Bacteria"/>
</dbReference>
<dbReference type="HOGENOM" id="CLU_098841_0_1_10"/>
<dbReference type="OrthoDB" id="9810939at2"/>
<dbReference type="Proteomes" id="UP000000723">
    <property type="component" value="Chromosome"/>
</dbReference>
<dbReference type="GO" id="GO:0022625">
    <property type="term" value="C:cytosolic large ribosomal subunit"/>
    <property type="evidence" value="ECO:0007669"/>
    <property type="project" value="TreeGrafter"/>
</dbReference>
<dbReference type="GO" id="GO:0008097">
    <property type="term" value="F:5S rRNA binding"/>
    <property type="evidence" value="ECO:0007669"/>
    <property type="project" value="TreeGrafter"/>
</dbReference>
<dbReference type="GO" id="GO:0003735">
    <property type="term" value="F:structural constituent of ribosome"/>
    <property type="evidence" value="ECO:0007669"/>
    <property type="project" value="InterPro"/>
</dbReference>
<dbReference type="GO" id="GO:0006412">
    <property type="term" value="P:translation"/>
    <property type="evidence" value="ECO:0007669"/>
    <property type="project" value="UniProtKB-UniRule"/>
</dbReference>
<dbReference type="CDD" id="cd00432">
    <property type="entry name" value="Ribosomal_L18_L5e"/>
    <property type="match status" value="1"/>
</dbReference>
<dbReference type="FunFam" id="3.30.420.100:FF:000003">
    <property type="entry name" value="50S ribosomal protein L18"/>
    <property type="match status" value="1"/>
</dbReference>
<dbReference type="Gene3D" id="3.30.420.100">
    <property type="match status" value="1"/>
</dbReference>
<dbReference type="HAMAP" id="MF_01337_B">
    <property type="entry name" value="Ribosomal_uL18_B"/>
    <property type="match status" value="1"/>
</dbReference>
<dbReference type="InterPro" id="IPR004389">
    <property type="entry name" value="Ribosomal_uL18_bac-type"/>
</dbReference>
<dbReference type="InterPro" id="IPR005484">
    <property type="entry name" value="Ribosomal_uL18_bac/euk"/>
</dbReference>
<dbReference type="NCBIfam" id="TIGR00060">
    <property type="entry name" value="L18_bact"/>
    <property type="match status" value="1"/>
</dbReference>
<dbReference type="PANTHER" id="PTHR12899">
    <property type="entry name" value="39S RIBOSOMAL PROTEIN L18, MITOCHONDRIAL"/>
    <property type="match status" value="1"/>
</dbReference>
<dbReference type="PANTHER" id="PTHR12899:SF3">
    <property type="entry name" value="LARGE RIBOSOMAL SUBUNIT PROTEIN UL18M"/>
    <property type="match status" value="1"/>
</dbReference>
<dbReference type="Pfam" id="PF00861">
    <property type="entry name" value="Ribosomal_L18p"/>
    <property type="match status" value="1"/>
</dbReference>
<dbReference type="SUPFAM" id="SSF53137">
    <property type="entry name" value="Translational machinery components"/>
    <property type="match status" value="1"/>
</dbReference>
<protein>
    <recommendedName>
        <fullName evidence="1">Large ribosomal subunit protein uL18</fullName>
    </recommendedName>
    <alternativeName>
        <fullName evidence="2">50S ribosomal protein L18</fullName>
    </alternativeName>
</protein>
<sequence>MTAKGLRRIKIKKRIRKYIFGTAERPRLTVFRSNRQIYSQLIDDSTGNTLVVASSLGITEKVSKKKIAYRTGVLVAQKAKEVGIRSVVFDRNGYLYHGRVKELADAAREEGLKF</sequence>
<gene>
    <name evidence="1" type="primary">rplR</name>
    <name type="ordered locus">CFPG_078</name>
</gene>
<comment type="function">
    <text evidence="1">This is one of the proteins that bind and probably mediate the attachment of the 5S RNA into the large ribosomal subunit, where it forms part of the central protuberance.</text>
</comment>
<comment type="subunit">
    <text evidence="1">Part of the 50S ribosomal subunit; part of the 5S rRNA/L5/L18/L25 subcomplex. Contacts the 5S and 23S rRNAs.</text>
</comment>
<comment type="similarity">
    <text evidence="1">Belongs to the universal ribosomal protein uL18 family.</text>
</comment>
<reference key="1">
    <citation type="journal article" date="2008" name="Science">
        <title>Genome of an endosymbiont coupling N2 fixation to cellulolysis within RT protist cells in termite gut.</title>
        <authorList>
            <person name="Hongoh Y."/>
            <person name="Sharma V.K."/>
            <person name="Prakash T."/>
            <person name="Noda S."/>
            <person name="Toh H."/>
            <person name="Taylor T.D."/>
            <person name="Kudo T."/>
            <person name="Sakaki Y."/>
            <person name="Toyoda A."/>
            <person name="Hattori M."/>
            <person name="Ohkuma M."/>
        </authorList>
    </citation>
    <scope>NUCLEOTIDE SEQUENCE [LARGE SCALE GENOMIC DNA]</scope>
</reference>
<proteinExistence type="inferred from homology"/>
<accession>B6YQ69</accession>
<organism>
    <name type="scientific">Azobacteroides pseudotrichonymphae genomovar. CFP2</name>
    <dbReference type="NCBI Taxonomy" id="511995"/>
    <lineage>
        <taxon>Bacteria</taxon>
        <taxon>Pseudomonadati</taxon>
        <taxon>Bacteroidota</taxon>
        <taxon>Bacteroidia</taxon>
        <taxon>Bacteroidales</taxon>
        <taxon>Candidatus Azobacteroides</taxon>
    </lineage>
</organism>
<name>RL18_AZOPC</name>
<keyword id="KW-1185">Reference proteome</keyword>
<keyword id="KW-0687">Ribonucleoprotein</keyword>
<keyword id="KW-0689">Ribosomal protein</keyword>
<keyword id="KW-0694">RNA-binding</keyword>
<keyword id="KW-0699">rRNA-binding</keyword>
<evidence type="ECO:0000255" key="1">
    <source>
        <dbReference type="HAMAP-Rule" id="MF_01337"/>
    </source>
</evidence>
<evidence type="ECO:0000305" key="2"/>
<feature type="chain" id="PRO_1000142615" description="Large ribosomal subunit protein uL18">
    <location>
        <begin position="1"/>
        <end position="114"/>
    </location>
</feature>